<comment type="function">
    <text evidence="1">This protein is involved in the repair of mismatches in DNA. It is possible that it carries out the mismatch recognition step. This protein has a weak ATPase activity.</text>
</comment>
<comment type="similarity">
    <text evidence="1">Belongs to the DNA mismatch repair MutS family.</text>
</comment>
<keyword id="KW-0067">ATP-binding</keyword>
<keyword id="KW-0227">DNA damage</keyword>
<keyword id="KW-0234">DNA repair</keyword>
<keyword id="KW-0238">DNA-binding</keyword>
<keyword id="KW-0547">Nucleotide-binding</keyword>
<feature type="chain" id="PRO_0000115165" description="DNA mismatch repair protein MutS">
    <location>
        <begin position="1"/>
        <end position="853"/>
    </location>
</feature>
<feature type="binding site" evidence="1">
    <location>
        <begin position="613"/>
        <end position="620"/>
    </location>
    <ligand>
        <name>ATP</name>
        <dbReference type="ChEBI" id="CHEBI:30616"/>
    </ligand>
</feature>
<name>MUTS_VIBPA</name>
<reference key="1">
    <citation type="journal article" date="2003" name="Lancet">
        <title>Genome sequence of Vibrio parahaemolyticus: a pathogenic mechanism distinct from that of V. cholerae.</title>
        <authorList>
            <person name="Makino K."/>
            <person name="Oshima K."/>
            <person name="Kurokawa K."/>
            <person name="Yokoyama K."/>
            <person name="Uda T."/>
            <person name="Tagomori K."/>
            <person name="Iijima Y."/>
            <person name="Najima M."/>
            <person name="Nakano M."/>
            <person name="Yamashita A."/>
            <person name="Kubota Y."/>
            <person name="Kimura S."/>
            <person name="Yasunaga T."/>
            <person name="Honda T."/>
            <person name="Shinagawa H."/>
            <person name="Hattori M."/>
            <person name="Iida T."/>
        </authorList>
    </citation>
    <scope>NUCLEOTIDE SEQUENCE [LARGE SCALE GENOMIC DNA]</scope>
    <source>
        <strain>RIMD 2210633</strain>
    </source>
</reference>
<sequence>MKAEQKHTPMMQQYLKLKAENPEILLFYRMGDFYELFYDDAKRASQLLDISLTKRGSSAGEPIPMAGVPFHAVEGYLAKLVQLGESVAICEQIGDPATSKGPVERKVVRIVTPGTVTDEALLSERLDNLIAAIYHHNGKFGYATLDVTSGRFQLTEPETEEAMMAELQRTAPRELLFPEDFEPVHLMSNRNGNRRRPVWEFELDTAKQQLNQQFGTRDLVGFGVEHASLGLCAAGCLIQYVKDTQRTALPHIRSLTFDRQDHSVILDAATRRNLEITQNLAGGTDNTLAAVLDHCSTPMGSRMLKRWLHQPMRCIDTLNNRLDAIGEIKDQGLFTDLQPTLKQIGDIERILARLALRSARPRDMARLRHAMQQLPELESLTASLTHPYLVKLAQYAAPIDEVCELLERAIKENPPVVIRDGGVIAEGYNEELDEWRKLADGATEYLEKLEADERERHGIDTLKVGYNAVHGFFIQVSRGQSHLVPPHYVRRQTLKNAERYIIPELKEHEDKVLNSKSKALALEKKLWEELFDLLMPHLEQMQNLASAVSQMDVLQNLAERADSLDYCRPTLVKDAGIHIQAGRHPVVEQVTSDPFIANPIELSPSRKMLIITGPNMGGKSTYMRQTALIALMAHIGSYVPAESAQIGSLDRIFTRIGASDDLASGRSTFMVEMTETANILHNATKNSLVLMDEIGRGTSTYDGLSLAWASAEWLATQIGAMTLFATHYFELTELPNLLPNLANVHLDAVEHGDSIAFMHAVQEGAASKSYGLAVAGLAGVPKTVIKNARTKLSQLEQLGQASDSPRPSTVDVANQLSLIPEPSEIEQALSNIDPDDLTPRQALEELYRLKKML</sequence>
<accession>Q87LQ9</accession>
<proteinExistence type="inferred from homology"/>
<dbReference type="EMBL" id="BA000031">
    <property type="protein sequence ID" value="BAC60815.1"/>
    <property type="molecule type" value="Genomic_DNA"/>
</dbReference>
<dbReference type="RefSeq" id="NP_798931.1">
    <property type="nucleotide sequence ID" value="NC_004603.1"/>
</dbReference>
<dbReference type="RefSeq" id="WP_005478546.1">
    <property type="nucleotide sequence ID" value="NC_004603.1"/>
</dbReference>
<dbReference type="SMR" id="Q87LQ9"/>
<dbReference type="GeneID" id="1190076"/>
<dbReference type="KEGG" id="vpa:VP2552"/>
<dbReference type="PATRIC" id="fig|223926.6.peg.2450"/>
<dbReference type="eggNOG" id="COG0249">
    <property type="taxonomic scope" value="Bacteria"/>
</dbReference>
<dbReference type="HOGENOM" id="CLU_002472_4_0_6"/>
<dbReference type="Proteomes" id="UP000002493">
    <property type="component" value="Chromosome 1"/>
</dbReference>
<dbReference type="GO" id="GO:0005829">
    <property type="term" value="C:cytosol"/>
    <property type="evidence" value="ECO:0007669"/>
    <property type="project" value="TreeGrafter"/>
</dbReference>
<dbReference type="GO" id="GO:0005524">
    <property type="term" value="F:ATP binding"/>
    <property type="evidence" value="ECO:0007669"/>
    <property type="project" value="UniProtKB-UniRule"/>
</dbReference>
<dbReference type="GO" id="GO:0140664">
    <property type="term" value="F:ATP-dependent DNA damage sensor activity"/>
    <property type="evidence" value="ECO:0007669"/>
    <property type="project" value="InterPro"/>
</dbReference>
<dbReference type="GO" id="GO:0003684">
    <property type="term" value="F:damaged DNA binding"/>
    <property type="evidence" value="ECO:0007669"/>
    <property type="project" value="UniProtKB-UniRule"/>
</dbReference>
<dbReference type="GO" id="GO:0030983">
    <property type="term" value="F:mismatched DNA binding"/>
    <property type="evidence" value="ECO:0007669"/>
    <property type="project" value="InterPro"/>
</dbReference>
<dbReference type="GO" id="GO:0006298">
    <property type="term" value="P:mismatch repair"/>
    <property type="evidence" value="ECO:0007669"/>
    <property type="project" value="UniProtKB-UniRule"/>
</dbReference>
<dbReference type="CDD" id="cd03284">
    <property type="entry name" value="ABC_MutS1"/>
    <property type="match status" value="1"/>
</dbReference>
<dbReference type="FunFam" id="1.10.1420.10:FF:000002">
    <property type="entry name" value="DNA mismatch repair protein MutS"/>
    <property type="match status" value="1"/>
</dbReference>
<dbReference type="FunFam" id="3.30.420.110:FF:000001">
    <property type="entry name" value="DNA mismatch repair protein MutS"/>
    <property type="match status" value="1"/>
</dbReference>
<dbReference type="FunFam" id="3.40.1170.10:FF:000001">
    <property type="entry name" value="DNA mismatch repair protein MutS"/>
    <property type="match status" value="1"/>
</dbReference>
<dbReference type="FunFam" id="3.40.50.300:FF:000283">
    <property type="entry name" value="DNA mismatch repair protein MutS"/>
    <property type="match status" value="1"/>
</dbReference>
<dbReference type="Gene3D" id="1.10.1420.10">
    <property type="match status" value="2"/>
</dbReference>
<dbReference type="Gene3D" id="6.10.140.430">
    <property type="match status" value="1"/>
</dbReference>
<dbReference type="Gene3D" id="3.40.1170.10">
    <property type="entry name" value="DNA repair protein MutS, domain I"/>
    <property type="match status" value="1"/>
</dbReference>
<dbReference type="Gene3D" id="3.30.420.110">
    <property type="entry name" value="MutS, connector domain"/>
    <property type="match status" value="1"/>
</dbReference>
<dbReference type="Gene3D" id="3.40.50.300">
    <property type="entry name" value="P-loop containing nucleotide triphosphate hydrolases"/>
    <property type="match status" value="1"/>
</dbReference>
<dbReference type="HAMAP" id="MF_00096">
    <property type="entry name" value="MutS"/>
    <property type="match status" value="1"/>
</dbReference>
<dbReference type="InterPro" id="IPR005748">
    <property type="entry name" value="DNA_mismatch_repair_MutS"/>
</dbReference>
<dbReference type="InterPro" id="IPR007695">
    <property type="entry name" value="DNA_mismatch_repair_MutS-lik_N"/>
</dbReference>
<dbReference type="InterPro" id="IPR017261">
    <property type="entry name" value="DNA_mismatch_repair_MutS/MSH"/>
</dbReference>
<dbReference type="InterPro" id="IPR000432">
    <property type="entry name" value="DNA_mismatch_repair_MutS_C"/>
</dbReference>
<dbReference type="InterPro" id="IPR007861">
    <property type="entry name" value="DNA_mismatch_repair_MutS_clamp"/>
</dbReference>
<dbReference type="InterPro" id="IPR007696">
    <property type="entry name" value="DNA_mismatch_repair_MutS_core"/>
</dbReference>
<dbReference type="InterPro" id="IPR016151">
    <property type="entry name" value="DNA_mismatch_repair_MutS_N"/>
</dbReference>
<dbReference type="InterPro" id="IPR036187">
    <property type="entry name" value="DNA_mismatch_repair_MutS_sf"/>
</dbReference>
<dbReference type="InterPro" id="IPR007860">
    <property type="entry name" value="DNA_mmatch_repair_MutS_con_dom"/>
</dbReference>
<dbReference type="InterPro" id="IPR045076">
    <property type="entry name" value="MutS"/>
</dbReference>
<dbReference type="InterPro" id="IPR036678">
    <property type="entry name" value="MutS_con_dom_sf"/>
</dbReference>
<dbReference type="InterPro" id="IPR027417">
    <property type="entry name" value="P-loop_NTPase"/>
</dbReference>
<dbReference type="NCBIfam" id="TIGR01070">
    <property type="entry name" value="mutS1"/>
    <property type="match status" value="1"/>
</dbReference>
<dbReference type="NCBIfam" id="NF003810">
    <property type="entry name" value="PRK05399.1"/>
    <property type="match status" value="1"/>
</dbReference>
<dbReference type="PANTHER" id="PTHR11361:SF34">
    <property type="entry name" value="DNA MISMATCH REPAIR PROTEIN MSH1, MITOCHONDRIAL"/>
    <property type="match status" value="1"/>
</dbReference>
<dbReference type="PANTHER" id="PTHR11361">
    <property type="entry name" value="DNA MISMATCH REPAIR PROTEIN MUTS FAMILY MEMBER"/>
    <property type="match status" value="1"/>
</dbReference>
<dbReference type="Pfam" id="PF01624">
    <property type="entry name" value="MutS_I"/>
    <property type="match status" value="1"/>
</dbReference>
<dbReference type="Pfam" id="PF05188">
    <property type="entry name" value="MutS_II"/>
    <property type="match status" value="1"/>
</dbReference>
<dbReference type="Pfam" id="PF05192">
    <property type="entry name" value="MutS_III"/>
    <property type="match status" value="1"/>
</dbReference>
<dbReference type="Pfam" id="PF05190">
    <property type="entry name" value="MutS_IV"/>
    <property type="match status" value="1"/>
</dbReference>
<dbReference type="Pfam" id="PF00488">
    <property type="entry name" value="MutS_V"/>
    <property type="match status" value="1"/>
</dbReference>
<dbReference type="PIRSF" id="PIRSF037677">
    <property type="entry name" value="DNA_mis_repair_Msh6"/>
    <property type="match status" value="1"/>
</dbReference>
<dbReference type="SMART" id="SM00534">
    <property type="entry name" value="MUTSac"/>
    <property type="match status" value="1"/>
</dbReference>
<dbReference type="SMART" id="SM00533">
    <property type="entry name" value="MUTSd"/>
    <property type="match status" value="1"/>
</dbReference>
<dbReference type="SUPFAM" id="SSF55271">
    <property type="entry name" value="DNA repair protein MutS, domain I"/>
    <property type="match status" value="1"/>
</dbReference>
<dbReference type="SUPFAM" id="SSF53150">
    <property type="entry name" value="DNA repair protein MutS, domain II"/>
    <property type="match status" value="1"/>
</dbReference>
<dbReference type="SUPFAM" id="SSF48334">
    <property type="entry name" value="DNA repair protein MutS, domain III"/>
    <property type="match status" value="1"/>
</dbReference>
<dbReference type="SUPFAM" id="SSF52540">
    <property type="entry name" value="P-loop containing nucleoside triphosphate hydrolases"/>
    <property type="match status" value="1"/>
</dbReference>
<dbReference type="PROSITE" id="PS00486">
    <property type="entry name" value="DNA_MISMATCH_REPAIR_2"/>
    <property type="match status" value="1"/>
</dbReference>
<protein>
    <recommendedName>
        <fullName evidence="1">DNA mismatch repair protein MutS</fullName>
    </recommendedName>
</protein>
<gene>
    <name evidence="1" type="primary">mutS</name>
    <name type="ordered locus">VP2552</name>
</gene>
<evidence type="ECO:0000255" key="1">
    <source>
        <dbReference type="HAMAP-Rule" id="MF_00096"/>
    </source>
</evidence>
<organism>
    <name type="scientific">Vibrio parahaemolyticus serotype O3:K6 (strain RIMD 2210633)</name>
    <dbReference type="NCBI Taxonomy" id="223926"/>
    <lineage>
        <taxon>Bacteria</taxon>
        <taxon>Pseudomonadati</taxon>
        <taxon>Pseudomonadota</taxon>
        <taxon>Gammaproteobacteria</taxon>
        <taxon>Vibrionales</taxon>
        <taxon>Vibrionaceae</taxon>
        <taxon>Vibrio</taxon>
    </lineage>
</organism>